<proteinExistence type="evidence at protein level"/>
<sequence length="103" mass="10859">MAAISINVSTVKPLGDRVFVKVSPAEEKTAGGILLPDNAKEKPQIGEVVQVGPGKRNDDGTYSPVEVKVGDKVLYSKYAGTDIKLGGDDYVLLTEKDILASVA</sequence>
<gene>
    <name evidence="1" type="primary">groES</name>
    <name evidence="1" type="synonym">groS</name>
    <name type="ordered locus">slr2075</name>
</gene>
<organism>
    <name type="scientific">Synechocystis sp. (strain ATCC 27184 / PCC 6803 / Kazusa)</name>
    <dbReference type="NCBI Taxonomy" id="1111708"/>
    <lineage>
        <taxon>Bacteria</taxon>
        <taxon>Bacillati</taxon>
        <taxon>Cyanobacteriota</taxon>
        <taxon>Cyanophyceae</taxon>
        <taxon>Synechococcales</taxon>
        <taxon>Merismopediaceae</taxon>
        <taxon>Synechocystis</taxon>
    </lineage>
</organism>
<keyword id="KW-0143">Chaperone</keyword>
<keyword id="KW-0963">Cytoplasm</keyword>
<keyword id="KW-0903">Direct protein sequencing</keyword>
<keyword id="KW-1185">Reference proteome</keyword>
<keyword id="KW-0346">Stress response</keyword>
<evidence type="ECO:0000255" key="1">
    <source>
        <dbReference type="HAMAP-Rule" id="MF_00580"/>
    </source>
</evidence>
<evidence type="ECO:0000269" key="2">
    <source>
    </source>
</evidence>
<evidence type="ECO:0000269" key="3">
    <source>
    </source>
</evidence>
<evidence type="ECO:0000305" key="4"/>
<name>CH10_SYNY3</name>
<protein>
    <recommendedName>
        <fullName evidence="1">Co-chaperonin GroES</fullName>
    </recommendedName>
    <alternativeName>
        <fullName evidence="1">10 kDa chaperonin</fullName>
    </alternativeName>
    <alternativeName>
        <fullName evidence="1">Chaperonin-10</fullName>
        <shortName evidence="1">Cpn10</shortName>
    </alternativeName>
</protein>
<accession>Q05971</accession>
<dbReference type="EMBL" id="D12677">
    <property type="protein sequence ID" value="BAA02179.1"/>
    <property type="molecule type" value="Genomic_DNA"/>
</dbReference>
<dbReference type="EMBL" id="BA000022">
    <property type="protein sequence ID" value="BAA17410.1"/>
    <property type="status" value="ALT_INIT"/>
    <property type="molecule type" value="Genomic_DNA"/>
</dbReference>
<dbReference type="PIR" id="S77563">
    <property type="entry name" value="S77563"/>
</dbReference>
<dbReference type="SMR" id="Q05971"/>
<dbReference type="FunCoup" id="Q05971">
    <property type="interactions" value="389"/>
</dbReference>
<dbReference type="STRING" id="1148.gene:10498273"/>
<dbReference type="PaxDb" id="1148-1652488"/>
<dbReference type="EnsemblBacteria" id="BAA17410">
    <property type="protein sequence ID" value="BAA17410"/>
    <property type="gene ID" value="BAA17410"/>
</dbReference>
<dbReference type="KEGG" id="syn:slr2075"/>
<dbReference type="eggNOG" id="COG0234">
    <property type="taxonomic scope" value="Bacteria"/>
</dbReference>
<dbReference type="InParanoid" id="Q05971"/>
<dbReference type="PhylomeDB" id="Q05971"/>
<dbReference type="Proteomes" id="UP000001425">
    <property type="component" value="Chromosome"/>
</dbReference>
<dbReference type="GO" id="GO:0005737">
    <property type="term" value="C:cytoplasm"/>
    <property type="evidence" value="ECO:0007669"/>
    <property type="project" value="UniProtKB-SubCell"/>
</dbReference>
<dbReference type="GO" id="GO:0005524">
    <property type="term" value="F:ATP binding"/>
    <property type="evidence" value="ECO:0007669"/>
    <property type="project" value="InterPro"/>
</dbReference>
<dbReference type="GO" id="GO:0046872">
    <property type="term" value="F:metal ion binding"/>
    <property type="evidence" value="ECO:0000318"/>
    <property type="project" value="GO_Central"/>
</dbReference>
<dbReference type="GO" id="GO:0044183">
    <property type="term" value="F:protein folding chaperone"/>
    <property type="evidence" value="ECO:0007669"/>
    <property type="project" value="InterPro"/>
</dbReference>
<dbReference type="GO" id="GO:0051087">
    <property type="term" value="F:protein-folding chaperone binding"/>
    <property type="evidence" value="ECO:0000318"/>
    <property type="project" value="GO_Central"/>
</dbReference>
<dbReference type="GO" id="GO:0051082">
    <property type="term" value="F:unfolded protein binding"/>
    <property type="evidence" value="ECO:0000318"/>
    <property type="project" value="GO_Central"/>
</dbReference>
<dbReference type="GO" id="GO:0051085">
    <property type="term" value="P:chaperone cofactor-dependent protein refolding"/>
    <property type="evidence" value="ECO:0000318"/>
    <property type="project" value="GO_Central"/>
</dbReference>
<dbReference type="CDD" id="cd00320">
    <property type="entry name" value="cpn10"/>
    <property type="match status" value="1"/>
</dbReference>
<dbReference type="FunFam" id="2.30.33.40:FF:000001">
    <property type="entry name" value="10 kDa chaperonin"/>
    <property type="match status" value="1"/>
</dbReference>
<dbReference type="Gene3D" id="2.30.33.40">
    <property type="entry name" value="GroES chaperonin"/>
    <property type="match status" value="1"/>
</dbReference>
<dbReference type="HAMAP" id="MF_00580">
    <property type="entry name" value="CH10"/>
    <property type="match status" value="1"/>
</dbReference>
<dbReference type="InterPro" id="IPR020818">
    <property type="entry name" value="Chaperonin_GroES"/>
</dbReference>
<dbReference type="InterPro" id="IPR037124">
    <property type="entry name" value="Chaperonin_GroES_sf"/>
</dbReference>
<dbReference type="InterPro" id="IPR018369">
    <property type="entry name" value="Chaprnonin_Cpn10_CS"/>
</dbReference>
<dbReference type="InterPro" id="IPR011032">
    <property type="entry name" value="GroES-like_sf"/>
</dbReference>
<dbReference type="NCBIfam" id="NF001530">
    <property type="entry name" value="PRK00364.1-6"/>
    <property type="match status" value="1"/>
</dbReference>
<dbReference type="NCBIfam" id="NF001531">
    <property type="entry name" value="PRK00364.2-2"/>
    <property type="match status" value="1"/>
</dbReference>
<dbReference type="NCBIfam" id="NF001533">
    <property type="entry name" value="PRK00364.2-4"/>
    <property type="match status" value="1"/>
</dbReference>
<dbReference type="NCBIfam" id="NF001534">
    <property type="entry name" value="PRK00364.2-5"/>
    <property type="match status" value="1"/>
</dbReference>
<dbReference type="PANTHER" id="PTHR10772">
    <property type="entry name" value="10 KDA HEAT SHOCK PROTEIN"/>
    <property type="match status" value="1"/>
</dbReference>
<dbReference type="PANTHER" id="PTHR10772:SF58">
    <property type="entry name" value="CO-CHAPERONIN GROES"/>
    <property type="match status" value="1"/>
</dbReference>
<dbReference type="Pfam" id="PF00166">
    <property type="entry name" value="Cpn10"/>
    <property type="match status" value="1"/>
</dbReference>
<dbReference type="PRINTS" id="PR00297">
    <property type="entry name" value="CHAPERONIN10"/>
</dbReference>
<dbReference type="SMART" id="SM00883">
    <property type="entry name" value="Cpn10"/>
    <property type="match status" value="1"/>
</dbReference>
<dbReference type="SUPFAM" id="SSF50129">
    <property type="entry name" value="GroES-like"/>
    <property type="match status" value="1"/>
</dbReference>
<dbReference type="PROSITE" id="PS00681">
    <property type="entry name" value="CHAPERONINS_CPN10"/>
    <property type="match status" value="1"/>
</dbReference>
<comment type="function">
    <text evidence="1">Together with the chaperonin GroEL, plays an essential role in assisting protein folding. The GroEL-GroES system forms a nano-cage that allows encapsulation of the non-native substrate proteins and provides a physical environment optimized to promote and accelerate protein folding. GroES binds to the apical surface of the GroEL ring, thereby capping the opening of the GroEL channel.</text>
</comment>
<comment type="subunit">
    <text evidence="1">Heptamer of 7 subunits arranged in a ring. Interacts with the chaperonin GroEL.</text>
</comment>
<comment type="subcellular location">
    <subcellularLocation>
        <location evidence="1">Cytoplasm</location>
    </subcellularLocation>
</comment>
<comment type="induction">
    <text>By heat shock.</text>
</comment>
<comment type="similarity">
    <text evidence="1 4">Belongs to the GroES chaperonin family.</text>
</comment>
<comment type="sequence caution" evidence="4">
    <conflict type="erroneous initiation">
        <sequence resource="EMBL-CDS" id="BAA17410"/>
    </conflict>
</comment>
<feature type="initiator methionine" description="Removed" evidence="2 3">
    <location>
        <position position="1"/>
    </location>
</feature>
<feature type="chain" id="PRO_0000174880" description="Co-chaperonin GroES">
    <location>
        <begin position="2"/>
        <end position="103"/>
    </location>
</feature>
<reference key="1">
    <citation type="journal article" date="1993" name="J. Biol. Chem.">
        <title>A second groEL-like gene, organized in a groESL operon is present in the genome of Synechocystis sp. PCC 6803.</title>
        <authorList>
            <person name="Lehel C."/>
            <person name="Los D.A."/>
            <person name="Wada H."/>
            <person name="Gyorgyei J."/>
            <person name="Horvath I."/>
            <person name="Kovacs E."/>
            <person name="Murata N."/>
            <person name="Vigh L."/>
        </authorList>
    </citation>
    <scope>NUCLEOTIDE SEQUENCE [GENOMIC DNA]</scope>
    <scope>PROTEIN SEQUENCE OF 2-26</scope>
</reference>
<reference key="2">
    <citation type="journal article" date="1996" name="DNA Res.">
        <title>Sequence analysis of the genome of the unicellular cyanobacterium Synechocystis sp. strain PCC6803. II. Sequence determination of the entire genome and assignment of potential protein-coding regions.</title>
        <authorList>
            <person name="Kaneko T."/>
            <person name="Sato S."/>
            <person name="Kotani H."/>
            <person name="Tanaka A."/>
            <person name="Asamizu E."/>
            <person name="Nakamura Y."/>
            <person name="Miyajima N."/>
            <person name="Hirosawa M."/>
            <person name="Sugiura M."/>
            <person name="Sasamoto S."/>
            <person name="Kimura T."/>
            <person name="Hosouchi T."/>
            <person name="Matsuno A."/>
            <person name="Muraki A."/>
            <person name="Nakazaki N."/>
            <person name="Naruo K."/>
            <person name="Okumura S."/>
            <person name="Shimpo S."/>
            <person name="Takeuchi C."/>
            <person name="Wada T."/>
            <person name="Watanabe A."/>
            <person name="Yamada M."/>
            <person name="Yasuda M."/>
            <person name="Tabata S."/>
        </authorList>
    </citation>
    <scope>NUCLEOTIDE SEQUENCE [LARGE SCALE GENOMIC DNA]</scope>
    <source>
        <strain>ATCC 27184 / PCC 6803 / Kazusa</strain>
    </source>
</reference>
<reference key="3">
    <citation type="journal article" date="1997" name="Electrophoresis">
        <title>Towards a proteome project of cyanobacterium Synechocystis sp. strain PCC6803: linking 130 protein spots with their respective genes.</title>
        <authorList>
            <person name="Sazuka T."/>
            <person name="Ohara O."/>
        </authorList>
    </citation>
    <scope>PROTEIN SEQUENCE OF 2-21</scope>
</reference>